<feature type="chain" id="PRO_0000295132" description="Apoptosis inducing factor BLCAP">
    <location>
        <begin position="1"/>
        <end position="87"/>
    </location>
</feature>
<feature type="transmembrane region" description="Helical" evidence="2">
    <location>
        <begin position="19"/>
        <end position="39"/>
    </location>
</feature>
<feature type="transmembrane region" description="Helical" evidence="2">
    <location>
        <begin position="43"/>
        <end position="63"/>
    </location>
</feature>
<reference key="1">
    <citation type="journal article" date="2005" name="Mol. Biol. Evol.">
        <title>Comparative phylogenetic analysis of blcap/nnat reveals eutherian-specific imprinted gene.</title>
        <authorList>
            <person name="Evans H.K."/>
            <person name="Weidman J.R."/>
            <person name="Cowley D.O."/>
            <person name="Jirtle R.L."/>
        </authorList>
    </citation>
    <scope>NUCLEOTIDE SEQUENCE [GENOMIC DNA]</scope>
</reference>
<sequence>MYCLQWLLPVLLIPKPLNPALWFSHSMFMGFYLLSFLLERKPCTICALVFLAALFLICYSCWGNCFLYHCTGSHLPESAHDPRIVGT</sequence>
<protein>
    <recommendedName>
        <fullName evidence="3">Apoptosis inducing factor BLCAP</fullName>
    </recommendedName>
    <alternativeName>
        <fullName>Bladder cancer-associated protein</fullName>
    </alternativeName>
</protein>
<name>BLCAP_DIDVI</name>
<evidence type="ECO:0000250" key="1">
    <source>
        <dbReference type="UniProtKB" id="P62952"/>
    </source>
</evidence>
<evidence type="ECO:0000255" key="2"/>
<evidence type="ECO:0000305" key="3"/>
<organism>
    <name type="scientific">Didelphis virginiana</name>
    <name type="common">North American opossum</name>
    <name type="synonym">Didelphis marsupialis virginiana</name>
    <dbReference type="NCBI Taxonomy" id="9267"/>
    <lineage>
        <taxon>Eukaryota</taxon>
        <taxon>Metazoa</taxon>
        <taxon>Chordata</taxon>
        <taxon>Craniata</taxon>
        <taxon>Vertebrata</taxon>
        <taxon>Euteleostomi</taxon>
        <taxon>Mammalia</taxon>
        <taxon>Metatheria</taxon>
        <taxon>Didelphimorphia</taxon>
        <taxon>Didelphidae</taxon>
        <taxon>Didelphis</taxon>
    </lineage>
</organism>
<gene>
    <name type="primary">BLCAP</name>
</gene>
<comment type="function">
    <text evidence="1">Acts as a tumor suppressor; induces growth arrest at G(1)/S checkpoint and apoptosis via RB1-dependent and p53/TP53- and NF-kappa-B-independent mechanisms. Modulates expression of genes involved in the regulation of proliferation, cell cycle and apoptosis.</text>
</comment>
<comment type="subunit">
    <text evidence="1">Interacts with RB1 (phosphorylated and unphosphorylated) (By similarity). Interacts with STAT3; the interaction is promoted by cell stimulation with IL6 and phosphorylation of STAT3 (By similarity).</text>
</comment>
<comment type="subcellular location">
    <subcellularLocation>
        <location evidence="1">Cytoplasm</location>
    </subcellularLocation>
    <subcellularLocation>
        <location evidence="1">Nucleus</location>
    </subcellularLocation>
    <subcellularLocation>
        <location evidence="2">Membrane</location>
        <topology evidence="2">Multi-pass membrane protein</topology>
    </subcellularLocation>
</comment>
<comment type="similarity">
    <text evidence="3">Belongs to the BLCAP family.</text>
</comment>
<proteinExistence type="inferred from homology"/>
<accession>Q4G2S9</accession>
<keyword id="KW-0053">Apoptosis</keyword>
<keyword id="KW-0131">Cell cycle</keyword>
<keyword id="KW-0963">Cytoplasm</keyword>
<keyword id="KW-0472">Membrane</keyword>
<keyword id="KW-0539">Nucleus</keyword>
<keyword id="KW-0812">Transmembrane</keyword>
<keyword id="KW-1133">Transmembrane helix</keyword>
<keyword id="KW-0043">Tumor suppressor</keyword>
<dbReference type="EMBL" id="AY821914">
    <property type="protein sequence ID" value="AAW73084.1"/>
    <property type="molecule type" value="Genomic_DNA"/>
</dbReference>
<dbReference type="GO" id="GO:0005737">
    <property type="term" value="C:cytoplasm"/>
    <property type="evidence" value="ECO:0007669"/>
    <property type="project" value="UniProtKB-SubCell"/>
</dbReference>
<dbReference type="GO" id="GO:0016020">
    <property type="term" value="C:membrane"/>
    <property type="evidence" value="ECO:0007669"/>
    <property type="project" value="UniProtKB-SubCell"/>
</dbReference>
<dbReference type="GO" id="GO:0005634">
    <property type="term" value="C:nucleus"/>
    <property type="evidence" value="ECO:0007669"/>
    <property type="project" value="UniProtKB-SubCell"/>
</dbReference>
<dbReference type="GO" id="GO:0006915">
    <property type="term" value="P:apoptotic process"/>
    <property type="evidence" value="ECO:0007669"/>
    <property type="project" value="UniProtKB-KW"/>
</dbReference>
<dbReference type="InterPro" id="IPR009598">
    <property type="entry name" value="BCALP"/>
</dbReference>
<dbReference type="PANTHER" id="PTHR13259">
    <property type="entry name" value="BLADDER CANCER 10 KD PROTEIN HOMOLOG"/>
    <property type="match status" value="1"/>
</dbReference>
<dbReference type="PANTHER" id="PTHR13259:SF1">
    <property type="entry name" value="BLADDER CANCER-ASSOCIATED PROTEIN"/>
    <property type="match status" value="1"/>
</dbReference>
<dbReference type="Pfam" id="PF06726">
    <property type="entry name" value="BC10"/>
    <property type="match status" value="1"/>
</dbReference>
<dbReference type="SMART" id="SM01396">
    <property type="entry name" value="BC10"/>
    <property type="match status" value="1"/>
</dbReference>